<comment type="catalytic activity">
    <reaction>
        <text>Transfers a segment of a (1-&gt;4)-alpha-D-glucan to a new position in an acceptor, which may be glucose or a (1-&gt;4)-alpha-D-glucan.</text>
        <dbReference type="EC" id="2.4.1.25"/>
    </reaction>
</comment>
<comment type="subcellular location">
    <subcellularLocation>
        <location evidence="1">Cytoplasm</location>
    </subcellularLocation>
</comment>
<comment type="similarity">
    <text evidence="2">Belongs to the disproportionating enzyme family.</text>
</comment>
<keyword id="KW-0119">Carbohydrate metabolism</keyword>
<keyword id="KW-0963">Cytoplasm</keyword>
<keyword id="KW-0328">Glycosyltransferase</keyword>
<keyword id="KW-1185">Reference proteome</keyword>
<keyword id="KW-0808">Transferase</keyword>
<organism>
    <name type="scientific">Chlamydia trachomatis serovar D (strain ATCC VR-885 / DSM 19411 / UW-3/Cx)</name>
    <dbReference type="NCBI Taxonomy" id="272561"/>
    <lineage>
        <taxon>Bacteria</taxon>
        <taxon>Pseudomonadati</taxon>
        <taxon>Chlamydiota</taxon>
        <taxon>Chlamydiia</taxon>
        <taxon>Chlamydiales</taxon>
        <taxon>Chlamydiaceae</taxon>
        <taxon>Chlamydia/Chlamydophila group</taxon>
        <taxon>Chlamydia</taxon>
    </lineage>
</organism>
<name>MALQ_CHLTR</name>
<accession>O84089</accession>
<reference key="1">
    <citation type="journal article" date="1998" name="Science">
        <title>Genome sequence of an obligate intracellular pathogen of humans: Chlamydia trachomatis.</title>
        <authorList>
            <person name="Stephens R.S."/>
            <person name="Kalman S."/>
            <person name="Lammel C.J."/>
            <person name="Fan J."/>
            <person name="Marathe R."/>
            <person name="Aravind L."/>
            <person name="Mitchell W.P."/>
            <person name="Olinger L."/>
            <person name="Tatusov R.L."/>
            <person name="Zhao Q."/>
            <person name="Koonin E.V."/>
            <person name="Davis R.W."/>
        </authorList>
    </citation>
    <scope>NUCLEOTIDE SEQUENCE [LARGE SCALE GENOMIC DNA]</scope>
    <source>
        <strain>ATCC VR-885 / DSM 19411 / UW-3/Cx</strain>
    </source>
</reference>
<evidence type="ECO:0000250" key="1"/>
<evidence type="ECO:0000305" key="2"/>
<sequence length="527" mass="61454">MPSLSQSRRIIQQSSIRKIWNQIDTSPKHGVCVPLFSLYTQESCGIGEFLDLIPMIDWCISCGFQILQILPINDTGSCSSPYNSISSIALNPLHLSISALPYKEEVPAAETRIREMQQLSQLPQVHYEKVRSMKRDFFQEYYRVCKQKKLTDHPDFYAFCEQEKYWLHPYALFRSIREHLDNLPINHWPTTYTDLSQITEHERTFAEDIQFHSYLQYLCFQQMTQVREHANCKSCLIKGDIPILISKDSCDVWFYRHYFSSSESVGAPPDLYNAEGQNWHLPICNMKTLQQDNYLWWKERLRYAENFYSLYRLDHVVGLFRFWVWDESGCGRFEPHDPKNYLAQGQDILSHLLTSSSMLPIGEDLGTIPSDVKRMLESFAVCGTRIPRWERNWEGNGAYTPFDQYDPLSVTSLSTHDSSTLASWWKESPQESKLFAQFLGLPYSSTLSLHNHTEILKLSHKTSSIFRINLINDYLALFPDLISKTPRYERINLPGTISKNNWVYRVKPSIEDLSSHSKLNSLLEALF</sequence>
<dbReference type="EC" id="2.4.1.25"/>
<dbReference type="EMBL" id="AE001273">
    <property type="protein sequence ID" value="AAC67678.1"/>
    <property type="molecule type" value="Genomic_DNA"/>
</dbReference>
<dbReference type="PIR" id="G71557">
    <property type="entry name" value="G71557"/>
</dbReference>
<dbReference type="RefSeq" id="NP_219590.1">
    <property type="nucleotide sequence ID" value="NC_000117.1"/>
</dbReference>
<dbReference type="RefSeq" id="WP_010725041.1">
    <property type="nucleotide sequence ID" value="NC_000117.1"/>
</dbReference>
<dbReference type="SMR" id="O84089"/>
<dbReference type="STRING" id="272561.CT_087"/>
<dbReference type="CAZy" id="GH77">
    <property type="family name" value="Glycoside Hydrolase Family 77"/>
</dbReference>
<dbReference type="EnsemblBacteria" id="AAC67678">
    <property type="protein sequence ID" value="AAC67678"/>
    <property type="gene ID" value="CT_087"/>
</dbReference>
<dbReference type="GeneID" id="884150"/>
<dbReference type="KEGG" id="ctr:CT_087"/>
<dbReference type="PATRIC" id="fig|272561.5.peg.95"/>
<dbReference type="HOGENOM" id="CLU_014132_2_1_0"/>
<dbReference type="InParanoid" id="O84089"/>
<dbReference type="OrthoDB" id="9811841at2"/>
<dbReference type="Proteomes" id="UP000000431">
    <property type="component" value="Chromosome"/>
</dbReference>
<dbReference type="GO" id="GO:0005737">
    <property type="term" value="C:cytoplasm"/>
    <property type="evidence" value="ECO:0007669"/>
    <property type="project" value="UniProtKB-SubCell"/>
</dbReference>
<dbReference type="GO" id="GO:0004134">
    <property type="term" value="F:4-alpha-glucanotransferase activity"/>
    <property type="evidence" value="ECO:0007669"/>
    <property type="project" value="UniProtKB-EC"/>
</dbReference>
<dbReference type="GO" id="GO:0005975">
    <property type="term" value="P:carbohydrate metabolic process"/>
    <property type="evidence" value="ECO:0007669"/>
    <property type="project" value="InterPro"/>
</dbReference>
<dbReference type="Gene3D" id="3.20.20.80">
    <property type="entry name" value="Glycosidases"/>
    <property type="match status" value="1"/>
</dbReference>
<dbReference type="InterPro" id="IPR003385">
    <property type="entry name" value="Glyco_hydro_77"/>
</dbReference>
<dbReference type="InterPro" id="IPR017853">
    <property type="entry name" value="Glycoside_hydrolase_SF"/>
</dbReference>
<dbReference type="NCBIfam" id="NF011081">
    <property type="entry name" value="PRK14508.1-4"/>
    <property type="match status" value="1"/>
</dbReference>
<dbReference type="PANTHER" id="PTHR32518">
    <property type="match status" value="1"/>
</dbReference>
<dbReference type="PANTHER" id="PTHR32518:SF3">
    <property type="entry name" value="4-ALPHA-GLUCANOTRANSFERASE"/>
    <property type="match status" value="1"/>
</dbReference>
<dbReference type="Pfam" id="PF02446">
    <property type="entry name" value="Glyco_hydro_77"/>
    <property type="match status" value="1"/>
</dbReference>
<dbReference type="SUPFAM" id="SSF51445">
    <property type="entry name" value="(Trans)glycosidases"/>
    <property type="match status" value="1"/>
</dbReference>
<feature type="chain" id="PRO_0000170123" description="4-alpha-glucanotransferase">
    <location>
        <begin position="1"/>
        <end position="527"/>
    </location>
</feature>
<gene>
    <name type="primary">malQ</name>
    <name type="ordered locus">CT_087</name>
</gene>
<protein>
    <recommendedName>
        <fullName>4-alpha-glucanotransferase</fullName>
        <ecNumber>2.4.1.25</ecNumber>
    </recommendedName>
    <alternativeName>
        <fullName>Amylomaltase</fullName>
    </alternativeName>
    <alternativeName>
        <fullName>Disproportionating enzyme</fullName>
        <shortName>D-enzyme</shortName>
    </alternativeName>
</protein>
<proteinExistence type="inferred from homology"/>